<sequence>MDPEETSVYLDYYYATSPNSDIRETHSHVPYTSVFLPVFYTAVFLTGVLGNLVLMGALHFKPGSRRLIDIFIINLAASDFIFLVTLPLWVDKEASLGLWRTGSFLCKGSSYMISVNMHCSVLLLTCMSVDRYLAIVWPVVSRKFRRTDCAYVVCASIWFISCLLGLPTLLSRELTLIDDKPYCAEKKATPIKLIWSLVALIFTFFVPLLSIVTCYCCIARKLCAHYQQSGKHNKKLKKSIKIIFIVVAAFLVSWLPFNTFKFLAIVSGLRQEHYLPSAILQLGMEVSGPLAFANSCVNPFIYYIFDSYIRRAIVHCLCPCLKNYDFGSSTETSDSHLTKALSTFIHAEDFARRRKRSVSL</sequence>
<keyword id="KW-1003">Cell membrane</keyword>
<keyword id="KW-0297">G-protein coupled receptor</keyword>
<keyword id="KW-0472">Membrane</keyword>
<keyword id="KW-0597">Phosphoprotein</keyword>
<keyword id="KW-0675">Receptor</keyword>
<keyword id="KW-1185">Reference proteome</keyword>
<keyword id="KW-0807">Transducer</keyword>
<keyword id="KW-0812">Transmembrane</keyword>
<keyword id="KW-1133">Transmembrane helix</keyword>
<proteinExistence type="evidence at transcript level"/>
<comment type="function">
    <text evidence="1 2">G protein-coupled receptor that plays an important role in immune homeostasis. Acts via its natural ligand GPR15LG, a chemokine-like polypeptide strongly expressed in gastrointestinal tissues. GPR15-GPR15LG signaling axis regulates intestinal homeostasis and inflammation through the migration of immune cells (By similarity). Controls thereby the specific homing of T-cells, particularly FOXP3+ regulatory T-cells (Tregs), to the large intestine lamina propria (By similarity). Also required for skin localization of thymus-derived dendritic epidermal T-cells (By similarity). Plays an important role in mediating cytoprotective function as well as angiogenesis of thrombomodulin (By similarity). Mechanistically, preferentially signals through the Gi/o pathway to inhibit adenylate cyclase activity and activate a phosphatidylinositol-calcium second messenger system that regulates the release of Ca(2+) ions from intracellular stores (By similarity).</text>
</comment>
<comment type="subunit">
    <text evidence="1">Interacts with adapter YWHAE; this interaction promotes ER-to-Golgi transport of GPR15.</text>
</comment>
<comment type="subcellular location">
    <subcellularLocation>
        <location evidence="1">Cell membrane</location>
        <topology evidence="1">Multi-pass membrane protein</topology>
    </subcellularLocation>
</comment>
<comment type="PTM">
    <text evidence="1">Phosphorylation is necessary for YWHAE binding and efficient surface expression.</text>
</comment>
<comment type="PTM">
    <text evidence="1">O-glycosylated. Sialylated O-glycans in the N-terminal tail inhibits binding of GPR15LG.</text>
</comment>
<comment type="PTM">
    <text evidence="1">Sulfation is required for efficient binding of GPR15LG.</text>
</comment>
<comment type="similarity">
    <text evidence="4">Belongs to the G-protein coupled receptor 1 family.</text>
</comment>
<name>GPR15_PANTR</name>
<dbReference type="EMBL" id="AF084228">
    <property type="protein sequence ID" value="AAD52040.1"/>
    <property type="molecule type" value="mRNA"/>
</dbReference>
<dbReference type="EMBL" id="AF326969">
    <property type="protein sequence ID" value="AAG49591.1"/>
    <property type="molecule type" value="mRNA"/>
</dbReference>
<dbReference type="RefSeq" id="NP_001009030.1">
    <property type="nucleotide sequence ID" value="NM_001009030.1"/>
</dbReference>
<dbReference type="RefSeq" id="XP_063661144.1">
    <property type="nucleotide sequence ID" value="XM_063805074.1"/>
</dbReference>
<dbReference type="RefSeq" id="XP_063661145.1">
    <property type="nucleotide sequence ID" value="XM_063805075.1"/>
</dbReference>
<dbReference type="SMR" id="Q9BG77"/>
<dbReference type="FunCoup" id="Q9BG77">
    <property type="interactions" value="309"/>
</dbReference>
<dbReference type="IntAct" id="Q9BG77">
    <property type="interactions" value="1"/>
</dbReference>
<dbReference type="MINT" id="Q9BG77"/>
<dbReference type="STRING" id="9598.ENSPTRP00000026148"/>
<dbReference type="PaxDb" id="9598-ENSPTRP00000026148"/>
<dbReference type="Ensembl" id="ENSPTRT00000028335.4">
    <property type="protein sequence ID" value="ENSPTRP00000026148.3"/>
    <property type="gene ID" value="ENSPTRG00000015150.4"/>
</dbReference>
<dbReference type="GeneID" id="450102"/>
<dbReference type="CTD" id="2838"/>
<dbReference type="VGNC" id="VGNC:7971">
    <property type="gene designation" value="GPR15"/>
</dbReference>
<dbReference type="eggNOG" id="ENOG502RCE3">
    <property type="taxonomic scope" value="Eukaryota"/>
</dbReference>
<dbReference type="GeneTree" id="ENSGT01130000278303"/>
<dbReference type="HOGENOM" id="CLU_009579_8_1_1"/>
<dbReference type="InParanoid" id="Q9BG77"/>
<dbReference type="OMA" id="LTFYCSI"/>
<dbReference type="OrthoDB" id="4297at9604"/>
<dbReference type="TreeFam" id="TF330024"/>
<dbReference type="Proteomes" id="UP000002277">
    <property type="component" value="Chromosome 3"/>
</dbReference>
<dbReference type="Bgee" id="ENSPTRG00000015150">
    <property type="expression patterns" value="Expressed in lymph node"/>
</dbReference>
<dbReference type="GO" id="GO:0005768">
    <property type="term" value="C:endosome"/>
    <property type="evidence" value="ECO:0007669"/>
    <property type="project" value="Ensembl"/>
</dbReference>
<dbReference type="GO" id="GO:0005886">
    <property type="term" value="C:plasma membrane"/>
    <property type="evidence" value="ECO:0000250"/>
    <property type="project" value="UniProtKB"/>
</dbReference>
<dbReference type="GO" id="GO:0015026">
    <property type="term" value="F:coreceptor activity"/>
    <property type="evidence" value="ECO:0007669"/>
    <property type="project" value="Ensembl"/>
</dbReference>
<dbReference type="GO" id="GO:0004930">
    <property type="term" value="F:G protein-coupled receptor activity"/>
    <property type="evidence" value="ECO:0000318"/>
    <property type="project" value="GO_Central"/>
</dbReference>
<dbReference type="GO" id="GO:0001618">
    <property type="term" value="F:virus receptor activity"/>
    <property type="evidence" value="ECO:0007669"/>
    <property type="project" value="Ensembl"/>
</dbReference>
<dbReference type="GO" id="GO:0001525">
    <property type="term" value="P:angiogenesis"/>
    <property type="evidence" value="ECO:0000250"/>
    <property type="project" value="UniProtKB"/>
</dbReference>
<dbReference type="GO" id="GO:0007186">
    <property type="term" value="P:G protein-coupled receptor signaling pathway"/>
    <property type="evidence" value="ECO:0000250"/>
    <property type="project" value="UniProtKB"/>
</dbReference>
<dbReference type="GO" id="GO:0072678">
    <property type="term" value="P:T cell migration"/>
    <property type="evidence" value="ECO:0007669"/>
    <property type="project" value="Ensembl"/>
</dbReference>
<dbReference type="CDD" id="cd15194">
    <property type="entry name" value="7tmA_GPR15"/>
    <property type="match status" value="1"/>
</dbReference>
<dbReference type="FunFam" id="1.20.1070.10:FF:000187">
    <property type="entry name" value="G-protein coupled receptor 15"/>
    <property type="match status" value="1"/>
</dbReference>
<dbReference type="Gene3D" id="1.20.1070.10">
    <property type="entry name" value="Rhodopsin 7-helix transmembrane proteins"/>
    <property type="match status" value="1"/>
</dbReference>
<dbReference type="InterPro" id="IPR050119">
    <property type="entry name" value="CCR1-9-like"/>
</dbReference>
<dbReference type="InterPro" id="IPR000276">
    <property type="entry name" value="GPCR_Rhodpsn"/>
</dbReference>
<dbReference type="InterPro" id="IPR017452">
    <property type="entry name" value="GPCR_Rhodpsn_7TM"/>
</dbReference>
<dbReference type="PANTHER" id="PTHR10489">
    <property type="entry name" value="CELL ADHESION MOLECULE"/>
    <property type="match status" value="1"/>
</dbReference>
<dbReference type="PANTHER" id="PTHR10489:SF954">
    <property type="entry name" value="G PROTEIN-COUPLED RECEPTOR 25"/>
    <property type="match status" value="1"/>
</dbReference>
<dbReference type="Pfam" id="PF00001">
    <property type="entry name" value="7tm_1"/>
    <property type="match status" value="1"/>
</dbReference>
<dbReference type="PRINTS" id="PR00237">
    <property type="entry name" value="GPCRRHODOPSN"/>
</dbReference>
<dbReference type="PRINTS" id="PR01157">
    <property type="entry name" value="P2YPURNOCPTR"/>
</dbReference>
<dbReference type="SMART" id="SM01381">
    <property type="entry name" value="7TM_GPCR_Srsx"/>
    <property type="match status" value="1"/>
</dbReference>
<dbReference type="SUPFAM" id="SSF81321">
    <property type="entry name" value="Family A G protein-coupled receptor-like"/>
    <property type="match status" value="1"/>
</dbReference>
<dbReference type="PROSITE" id="PS00237">
    <property type="entry name" value="G_PROTEIN_RECEP_F1_1"/>
    <property type="match status" value="1"/>
</dbReference>
<dbReference type="PROSITE" id="PS50262">
    <property type="entry name" value="G_PROTEIN_RECEP_F1_2"/>
    <property type="match status" value="1"/>
</dbReference>
<evidence type="ECO:0000250" key="1">
    <source>
        <dbReference type="UniProtKB" id="P49685"/>
    </source>
</evidence>
<evidence type="ECO:0000250" key="2">
    <source>
        <dbReference type="UniProtKB" id="Q0VDU3"/>
    </source>
</evidence>
<evidence type="ECO:0000255" key="3"/>
<evidence type="ECO:0000255" key="4">
    <source>
        <dbReference type="PROSITE-ProRule" id="PRU00521"/>
    </source>
</evidence>
<evidence type="ECO:0000305" key="5"/>
<organism>
    <name type="scientific">Pan troglodytes</name>
    <name type="common">Chimpanzee</name>
    <dbReference type="NCBI Taxonomy" id="9598"/>
    <lineage>
        <taxon>Eukaryota</taxon>
        <taxon>Metazoa</taxon>
        <taxon>Chordata</taxon>
        <taxon>Craniata</taxon>
        <taxon>Vertebrata</taxon>
        <taxon>Euteleostomi</taxon>
        <taxon>Mammalia</taxon>
        <taxon>Eutheria</taxon>
        <taxon>Euarchontoglires</taxon>
        <taxon>Primates</taxon>
        <taxon>Haplorrhini</taxon>
        <taxon>Catarrhini</taxon>
        <taxon>Hominidae</taxon>
        <taxon>Pan</taxon>
    </lineage>
</organism>
<reference key="1">
    <citation type="journal article" date="1999" name="AIDS Res. Hum. Retroviruses">
        <title>Sequences and predicted structures of chimpanzee STRL33 (Bonzo) and gpr15 (BOB).</title>
        <authorList>
            <person name="Brussel A."/>
            <person name="Pretet J.-L."/>
            <person name="Girard M."/>
            <person name="Butor C."/>
        </authorList>
    </citation>
    <scope>NUCLEOTIDE SEQUENCE [MRNA]</scope>
</reference>
<reference key="2">
    <citation type="submission" date="2000-12" db="EMBL/GenBank/DDBJ databases">
        <title>Evolution of coreceptor usage of a unique HIV-1 strain recovered from a chimpanzee with AIDS.</title>
        <authorList>
            <person name="Yue L."/>
            <person name="Fultz P.N."/>
        </authorList>
    </citation>
    <scope>NUCLEOTIDE SEQUENCE [MRNA]</scope>
</reference>
<accession>Q9BG77</accession>
<gene>
    <name type="primary">GPR15</name>
</gene>
<protein>
    <recommendedName>
        <fullName>G-protein coupled receptor 15</fullName>
    </recommendedName>
    <alternativeName>
        <fullName>Brother of Bonzo</fullName>
        <shortName>BoB</shortName>
    </alternativeName>
</protein>
<feature type="chain" id="PRO_0000069535" description="G-protein coupled receptor 15">
    <location>
        <begin position="1"/>
        <end position="360"/>
    </location>
</feature>
<feature type="topological domain" description="Extracellular" evidence="3">
    <location>
        <begin position="1"/>
        <end position="33"/>
    </location>
</feature>
<feature type="transmembrane region" description="Helical; Name=1" evidence="3">
    <location>
        <begin position="34"/>
        <end position="54"/>
    </location>
</feature>
<feature type="topological domain" description="Cytoplasmic" evidence="3">
    <location>
        <begin position="55"/>
        <end position="69"/>
    </location>
</feature>
<feature type="transmembrane region" description="Helical; Name=2" evidence="3">
    <location>
        <begin position="70"/>
        <end position="90"/>
    </location>
</feature>
<feature type="topological domain" description="Extracellular" evidence="3">
    <location>
        <begin position="91"/>
        <end position="120"/>
    </location>
</feature>
<feature type="transmembrane region" description="Helical; Name=3" evidence="3">
    <location>
        <begin position="121"/>
        <end position="141"/>
    </location>
</feature>
<feature type="topological domain" description="Cytoplasmic" evidence="3">
    <location>
        <begin position="142"/>
        <end position="149"/>
    </location>
</feature>
<feature type="transmembrane region" description="Helical; Name=4" evidence="3">
    <location>
        <begin position="150"/>
        <end position="170"/>
    </location>
</feature>
<feature type="topological domain" description="Extracellular" evidence="3">
    <location>
        <begin position="171"/>
        <end position="192"/>
    </location>
</feature>
<feature type="transmembrane region" description="Helical; Name=5" evidence="3">
    <location>
        <begin position="193"/>
        <end position="213"/>
    </location>
</feature>
<feature type="topological domain" description="Cytoplasmic" evidence="3">
    <location>
        <begin position="214"/>
        <end position="239"/>
    </location>
</feature>
<feature type="transmembrane region" description="Helical; Name=6" evidence="3">
    <location>
        <begin position="240"/>
        <end position="260"/>
    </location>
</feature>
<feature type="topological domain" description="Extracellular" evidence="3">
    <location>
        <begin position="261"/>
        <end position="283"/>
    </location>
</feature>
<feature type="transmembrane region" description="Helical; Name=7" evidence="3">
    <location>
        <begin position="284"/>
        <end position="304"/>
    </location>
</feature>
<feature type="topological domain" description="Cytoplasmic" evidence="3">
    <location>
        <begin position="305"/>
        <end position="359"/>
    </location>
</feature>
<feature type="modified residue" description="Phosphoserine" evidence="1">
    <location>
        <position position="359"/>
    </location>
</feature>
<feature type="sequence conflict" description="In Ref. 2; AAG49591." evidence="5" ref="2">
    <original>D</original>
    <variation>G</variation>
    <location>
        <position position="148"/>
    </location>
</feature>
<feature type="sequence conflict" description="In Ref. 2; AAG49591." evidence="5" ref="2">
    <original>V</original>
    <variation>L</variation>
    <location>
        <position position="212"/>
    </location>
</feature>
<feature type="sequence conflict" description="In Ref. 2; AAG49591." evidence="5" ref="2">
    <original>S</original>
    <variation>Y</variation>
    <location>
        <position position="267"/>
    </location>
</feature>
<feature type="sequence conflict" description="In Ref. 2; AAG49591." evidence="5" ref="2">
    <original>R</original>
    <variation>S</variation>
    <location>
        <position position="356"/>
    </location>
</feature>